<gene>
    <name evidence="1" type="primary">glgC</name>
    <name type="synonym">agpT</name>
</gene>
<dbReference type="EC" id="2.7.7.27" evidence="1"/>
<dbReference type="EMBL" id="AF016923">
    <property type="protein sequence ID" value="AAB93540.1"/>
    <property type="molecule type" value="Genomic_DNA"/>
</dbReference>
<dbReference type="SMR" id="O52049"/>
<dbReference type="UniPathway" id="UPA00164"/>
<dbReference type="GO" id="GO:0005524">
    <property type="term" value="F:ATP binding"/>
    <property type="evidence" value="ECO:0007669"/>
    <property type="project" value="UniProtKB-KW"/>
</dbReference>
<dbReference type="GO" id="GO:0008878">
    <property type="term" value="F:glucose-1-phosphate adenylyltransferase activity"/>
    <property type="evidence" value="ECO:0007669"/>
    <property type="project" value="UniProtKB-UniRule"/>
</dbReference>
<dbReference type="GO" id="GO:0005978">
    <property type="term" value="P:glycogen biosynthetic process"/>
    <property type="evidence" value="ECO:0007669"/>
    <property type="project" value="UniProtKB-UniRule"/>
</dbReference>
<dbReference type="CDD" id="cd02508">
    <property type="entry name" value="ADP_Glucose_PP"/>
    <property type="match status" value="1"/>
</dbReference>
<dbReference type="CDD" id="cd04651">
    <property type="entry name" value="LbH_G1P_AT_C"/>
    <property type="match status" value="1"/>
</dbReference>
<dbReference type="Gene3D" id="2.160.10.10">
    <property type="entry name" value="Hexapeptide repeat proteins"/>
    <property type="match status" value="1"/>
</dbReference>
<dbReference type="Gene3D" id="3.90.550.10">
    <property type="entry name" value="Spore Coat Polysaccharide Biosynthesis Protein SpsA, Chain A"/>
    <property type="match status" value="1"/>
</dbReference>
<dbReference type="HAMAP" id="MF_00624">
    <property type="entry name" value="GlgC"/>
    <property type="match status" value="1"/>
</dbReference>
<dbReference type="InterPro" id="IPR011831">
    <property type="entry name" value="ADP-Glc_PPase"/>
</dbReference>
<dbReference type="InterPro" id="IPR005836">
    <property type="entry name" value="ADP_Glu_pyroP_CS"/>
</dbReference>
<dbReference type="InterPro" id="IPR023049">
    <property type="entry name" value="GlgC_bac"/>
</dbReference>
<dbReference type="InterPro" id="IPR056818">
    <property type="entry name" value="GlmU/GlgC-like_hexapep"/>
</dbReference>
<dbReference type="InterPro" id="IPR005835">
    <property type="entry name" value="NTP_transferase_dom"/>
</dbReference>
<dbReference type="InterPro" id="IPR029044">
    <property type="entry name" value="Nucleotide-diphossugar_trans"/>
</dbReference>
<dbReference type="InterPro" id="IPR011004">
    <property type="entry name" value="Trimer_LpxA-like_sf"/>
</dbReference>
<dbReference type="NCBIfam" id="TIGR02091">
    <property type="entry name" value="glgC"/>
    <property type="match status" value="1"/>
</dbReference>
<dbReference type="NCBIfam" id="NF001947">
    <property type="entry name" value="PRK00725.1"/>
    <property type="match status" value="1"/>
</dbReference>
<dbReference type="NCBIfam" id="NF002023">
    <property type="entry name" value="PRK00844.1"/>
    <property type="match status" value="1"/>
</dbReference>
<dbReference type="PANTHER" id="PTHR43523:SF2">
    <property type="entry name" value="GLUCOSE-1-PHOSPHATE ADENYLYLTRANSFERASE"/>
    <property type="match status" value="1"/>
</dbReference>
<dbReference type="PANTHER" id="PTHR43523">
    <property type="entry name" value="GLUCOSE-1-PHOSPHATE ADENYLYLTRANSFERASE-RELATED"/>
    <property type="match status" value="1"/>
</dbReference>
<dbReference type="Pfam" id="PF24894">
    <property type="entry name" value="Hexapep_GlmU"/>
    <property type="match status" value="1"/>
</dbReference>
<dbReference type="Pfam" id="PF00483">
    <property type="entry name" value="NTP_transferase"/>
    <property type="match status" value="1"/>
</dbReference>
<dbReference type="SUPFAM" id="SSF53448">
    <property type="entry name" value="Nucleotide-diphospho-sugar transferases"/>
    <property type="match status" value="1"/>
</dbReference>
<dbReference type="SUPFAM" id="SSF51161">
    <property type="entry name" value="Trimeric LpxA-like enzymes"/>
    <property type="match status" value="1"/>
</dbReference>
<dbReference type="PROSITE" id="PS00808">
    <property type="entry name" value="ADP_GLC_PYROPHOSPH_1"/>
    <property type="match status" value="1"/>
</dbReference>
<dbReference type="PROSITE" id="PS00809">
    <property type="entry name" value="ADP_GLC_PYROPHOSPH_2"/>
    <property type="match status" value="1"/>
</dbReference>
<dbReference type="PROSITE" id="PS00810">
    <property type="entry name" value="ADP_GLC_PYROPHOSPH_3"/>
    <property type="match status" value="1"/>
</dbReference>
<reference key="1">
    <citation type="submission" date="1997-08" db="EMBL/GenBank/DDBJ databases">
        <authorList>
            <person name="Ko J.H."/>
            <person name="Kim C.-H."/>
            <person name="Lee D.-S."/>
            <person name="Kim Y.S."/>
            <person name="Lee Y.-C."/>
        </authorList>
    </citation>
    <scope>NUCLEOTIDE SEQUENCE [GENOMIC DNA]</scope>
    <source>
        <strain>GK24</strain>
    </source>
</reference>
<sequence>MVKVEVLGMILAGGQGSRLYPLTAKRAKPAVPFGAKYRIIDFVLNNFVNSGIYAIYVLTQYKAQSLTEHIQRYWRFGAFLEDHFILLVPAQMYRYEELGPVWYRGTADAIYQNLHLVHNHAPKAVAVFGGDHIFKMNIRHMVEYHYDTRADITIAAYPVPVAEATRFGVLQVDEEWRITEFQEKPEEPKPIPGRPDMALASMGNYIFRTEALFELLEADARDETSAHDFGKGVIPRAIRVGYRVYAYDFHRNPIPGQEGPNLYWRDVGTLDAYYEASMDLVKVDPVFGLCSPVWPLRTANLFSPPAKFVHETGERVGRALNSLLAGGVIVSGGTVRESVLFRRVRVNSYSLVERSVLFDDVEVGRYCRIRNAIIDKNVKIPPHTEIGYDLELDRARGFTVTPEGVVVVPKGYRF</sequence>
<evidence type="ECO:0000255" key="1">
    <source>
        <dbReference type="HAMAP-Rule" id="MF_00624"/>
    </source>
</evidence>
<protein>
    <recommendedName>
        <fullName evidence="1">Glucose-1-phosphate adenylyltransferase</fullName>
        <ecNumber evidence="1">2.7.7.27</ecNumber>
    </recommendedName>
    <alternativeName>
        <fullName evidence="1">ADP-glucose pyrophosphorylase</fullName>
        <shortName evidence="1">ADPGlc PPase</shortName>
    </alternativeName>
    <alternativeName>
        <fullName evidence="1">ADP-glucose synthase</fullName>
    </alternativeName>
</protein>
<proteinExistence type="inferred from homology"/>
<accession>O52049</accession>
<organism>
    <name type="scientific">Thermus caldophilus</name>
    <dbReference type="NCBI Taxonomy" id="272"/>
    <lineage>
        <taxon>Bacteria</taxon>
        <taxon>Thermotogati</taxon>
        <taxon>Deinococcota</taxon>
        <taxon>Deinococci</taxon>
        <taxon>Thermales</taxon>
        <taxon>Thermaceae</taxon>
        <taxon>Thermus</taxon>
    </lineage>
</organism>
<keyword id="KW-0067">ATP-binding</keyword>
<keyword id="KW-0119">Carbohydrate metabolism</keyword>
<keyword id="KW-0320">Glycogen biosynthesis</keyword>
<keyword id="KW-0321">Glycogen metabolism</keyword>
<keyword id="KW-0547">Nucleotide-binding</keyword>
<keyword id="KW-0548">Nucleotidyltransferase</keyword>
<keyword id="KW-0808">Transferase</keyword>
<comment type="function">
    <text evidence="1">Involved in the biosynthesis of ADP-glucose, a building block required for the elongation reactions to produce glycogen. Catalyzes the reaction between ATP and alpha-D-glucose 1-phosphate (G1P) to produce pyrophosphate and ADP-Glc.</text>
</comment>
<comment type="catalytic activity">
    <reaction evidence="1">
        <text>alpha-D-glucose 1-phosphate + ATP + H(+) = ADP-alpha-D-glucose + diphosphate</text>
        <dbReference type="Rhea" id="RHEA:12120"/>
        <dbReference type="ChEBI" id="CHEBI:15378"/>
        <dbReference type="ChEBI" id="CHEBI:30616"/>
        <dbReference type="ChEBI" id="CHEBI:33019"/>
        <dbReference type="ChEBI" id="CHEBI:57498"/>
        <dbReference type="ChEBI" id="CHEBI:58601"/>
        <dbReference type="EC" id="2.7.7.27"/>
    </reaction>
</comment>
<comment type="pathway">
    <text evidence="1">Glycan biosynthesis; glycogen biosynthesis.</text>
</comment>
<comment type="subunit">
    <text evidence="1">Homotetramer.</text>
</comment>
<comment type="similarity">
    <text evidence="1">Belongs to the bacterial/plant glucose-1-phosphate adenylyltransferase family.</text>
</comment>
<feature type="chain" id="PRO_0000195339" description="Glucose-1-phosphate adenylyltransferase">
    <location>
        <begin position="1"/>
        <end position="414"/>
    </location>
</feature>
<feature type="binding site" evidence="1">
    <location>
        <position position="103"/>
    </location>
    <ligand>
        <name>alpha-D-glucose 1-phosphate</name>
        <dbReference type="ChEBI" id="CHEBI:58601"/>
    </ligand>
</feature>
<feature type="binding site" evidence="1">
    <location>
        <position position="168"/>
    </location>
    <ligand>
        <name>alpha-D-glucose 1-phosphate</name>
        <dbReference type="ChEBI" id="CHEBI:58601"/>
    </ligand>
</feature>
<feature type="binding site" evidence="1">
    <location>
        <begin position="183"/>
        <end position="184"/>
    </location>
    <ligand>
        <name>alpha-D-glucose 1-phosphate</name>
        <dbReference type="ChEBI" id="CHEBI:58601"/>
    </ligand>
</feature>
<feature type="binding site" evidence="1">
    <location>
        <position position="201"/>
    </location>
    <ligand>
        <name>alpha-D-glucose 1-phosphate</name>
        <dbReference type="ChEBI" id="CHEBI:58601"/>
    </ligand>
</feature>
<name>GLGC_THECA</name>